<gene>
    <name evidence="15" type="primary">OPR3</name>
    <name evidence="16" type="synonym">DDE1</name>
    <name evidence="19" type="ordered locus">At2g06050</name>
    <name evidence="20" type="ORF">F5K7.19</name>
</gene>
<feature type="chain" id="PRO_0000434361" description="12-oxophytodienoate reductase 3">
    <location>
        <begin position="1"/>
        <end position="391"/>
    </location>
</feature>
<feature type="initiator methionine" description="Removed; alternate" evidence="24">
    <location>
        <position position="1"/>
    </location>
</feature>
<feature type="chain" id="PRO_0000194485" description="12-oxophytodienoate reductase 3, N-terminally processed">
    <location>
        <begin position="2"/>
        <end position="391"/>
    </location>
</feature>
<feature type="short sequence motif" description="Microbody targeting signal" evidence="2">
    <location>
        <begin position="389"/>
        <end position="391"/>
    </location>
</feature>
<feature type="active site" description="Proton donor" evidence="18">
    <location>
        <position position="191"/>
    </location>
</feature>
<feature type="binding site" evidence="8 9 12 21 22 23">
    <location>
        <begin position="31"/>
        <end position="33"/>
    </location>
    <ligand>
        <name>FMN</name>
        <dbReference type="ChEBI" id="CHEBI:58210"/>
    </ligand>
</feature>
<feature type="binding site" evidence="8 9 21 23">
    <location>
        <position position="64"/>
    </location>
    <ligand>
        <name>FMN</name>
        <dbReference type="ChEBI" id="CHEBI:58210"/>
    </ligand>
</feature>
<feature type="binding site" evidence="8 9 12 21 22 23">
    <location>
        <position position="106"/>
    </location>
    <ligand>
        <name>FMN</name>
        <dbReference type="ChEBI" id="CHEBI:58210"/>
    </ligand>
</feature>
<feature type="binding site" evidence="12 22">
    <location>
        <position position="186"/>
    </location>
    <ligand>
        <name>substrate</name>
    </ligand>
</feature>
<feature type="binding site" evidence="8 9 12 21 22 23">
    <location>
        <position position="238"/>
    </location>
    <ligand>
        <name>FMN</name>
        <dbReference type="ChEBI" id="CHEBI:58210"/>
    </ligand>
</feature>
<feature type="binding site" evidence="12 22">
    <location>
        <position position="284"/>
    </location>
    <ligand>
        <name>substrate</name>
    </ligand>
</feature>
<feature type="binding site" evidence="8 9 12 21 22 23">
    <location>
        <begin position="320"/>
        <end position="322"/>
    </location>
    <ligand>
        <name>FMN</name>
        <dbReference type="ChEBI" id="CHEBI:58210"/>
    </ligand>
</feature>
<feature type="binding site" evidence="8 9 12 21 22 23">
    <location>
        <begin position="343"/>
        <end position="344"/>
    </location>
    <ligand>
        <name>FMN</name>
        <dbReference type="ChEBI" id="CHEBI:58210"/>
    </ligand>
</feature>
<feature type="modified residue" description="N-acetylmethionine" evidence="1">
    <location>
        <position position="1"/>
    </location>
</feature>
<feature type="modified residue" description="N-acetylthreonine; in 12-oxophytodienoate reductase 3, N-terminally processed" evidence="24">
    <location>
        <position position="2"/>
    </location>
</feature>
<feature type="sequence conflict" description="In Ref. 1; AAD38925, 2; AAF67635 and 3; AAG15379." evidence="17" ref="1 2 3">
    <original>A</original>
    <variation>E</variation>
    <location>
        <position position="213"/>
    </location>
</feature>
<feature type="sequence conflict" description="In Ref. 1; AAD38925, 2; AAF67635, 3; AAG15379 and 4; CAB66143." evidence="17" ref="1 2 3 4">
    <original>D</original>
    <variation>N</variation>
    <location>
        <position position="252"/>
    </location>
</feature>
<feature type="sequence conflict" description="In Ref. 1; AAD38925, 2; AAF67635, 3; AAG15379 and 4; CAB66143." evidence="17" ref="1 2 3 4">
    <original>G</original>
    <variation>D</variation>
    <location>
        <position position="262"/>
    </location>
</feature>
<feature type="sequence conflict" description="In Ref. 1; AAD38925, 2; AAF67635, 3; AAG15379 and 4; CAB66143." evidence="17" ref="1 2 3 4">
    <original>G</original>
    <variation>D</variation>
    <location>
        <position position="269"/>
    </location>
</feature>
<feature type="sequence conflict" description="In Ref. 1; AAD38925, 2; AAF67635, 3; AAG15379 and 4; CAB66143." evidence="17" ref="1 2 3 4">
    <original>S</original>
    <variation>L</variation>
    <location>
        <position position="273"/>
    </location>
</feature>
<feature type="sequence conflict" description="In Ref. 1; AAD38925, 2; AAF67635, 3; AAG15379 and 4; CAB66143." evidence="17" ref="1 2 3 4">
    <original>N</original>
    <variation>K</variation>
    <location>
        <position position="314"/>
    </location>
</feature>
<feature type="sequence conflict" description="In Ref. 2; AAF67635 and 3; AAG15379." evidence="17" ref="2 3">
    <original>E</original>
    <variation>K</variation>
    <location>
        <position position="361"/>
    </location>
</feature>
<feature type="sequence conflict" description="In Ref. 1; AAD38925, 3; AAG15379 and 4; CAB66143." evidence="17" ref="1 3 4">
    <original>F</original>
    <variation>S</variation>
    <location>
        <position position="388"/>
    </location>
</feature>
<feature type="strand" evidence="25">
    <location>
        <begin position="16"/>
        <end position="18"/>
    </location>
</feature>
<feature type="strand" evidence="25">
    <location>
        <begin position="21"/>
        <end position="24"/>
    </location>
</feature>
<feature type="strand" evidence="25">
    <location>
        <begin position="26"/>
        <end position="29"/>
    </location>
</feature>
<feature type="helix" evidence="25">
    <location>
        <begin position="38"/>
        <end position="40"/>
    </location>
</feature>
<feature type="helix" evidence="25">
    <location>
        <begin position="44"/>
        <end position="52"/>
    </location>
</feature>
<feature type="strand" evidence="25">
    <location>
        <begin position="59"/>
        <end position="68"/>
    </location>
</feature>
<feature type="helix" evidence="25">
    <location>
        <begin position="83"/>
        <end position="98"/>
    </location>
</feature>
<feature type="strand" evidence="25">
    <location>
        <begin position="102"/>
        <end position="108"/>
    </location>
</feature>
<feature type="helix" evidence="25">
    <location>
        <begin position="116"/>
        <end position="118"/>
    </location>
</feature>
<feature type="helix" evidence="25">
    <location>
        <begin position="120"/>
        <end position="122"/>
    </location>
</feature>
<feature type="strand" evidence="25">
    <location>
        <begin position="126"/>
        <end position="130"/>
    </location>
</feature>
<feature type="turn" evidence="25">
    <location>
        <begin position="135"/>
        <end position="137"/>
    </location>
</feature>
<feature type="helix" evidence="25">
    <location>
        <begin position="158"/>
        <end position="160"/>
    </location>
</feature>
<feature type="helix" evidence="25">
    <location>
        <begin position="161"/>
        <end position="178"/>
    </location>
</feature>
<feature type="strand" evidence="25">
    <location>
        <begin position="181"/>
        <end position="187"/>
    </location>
</feature>
<feature type="helix" evidence="25">
    <location>
        <begin position="192"/>
        <end position="197"/>
    </location>
</feature>
<feature type="turn" evidence="25">
    <location>
        <begin position="199"/>
        <end position="201"/>
    </location>
</feature>
<feature type="strand" evidence="25">
    <location>
        <begin position="209"/>
        <end position="211"/>
    </location>
</feature>
<feature type="helix" evidence="25">
    <location>
        <begin position="212"/>
        <end position="230"/>
    </location>
</feature>
<feature type="helix" evidence="25">
    <location>
        <begin position="232"/>
        <end position="234"/>
    </location>
</feature>
<feature type="strand" evidence="25">
    <location>
        <begin position="235"/>
        <end position="239"/>
    </location>
</feature>
<feature type="helix" evidence="25">
    <location>
        <begin position="245"/>
        <end position="247"/>
    </location>
</feature>
<feature type="helix" evidence="25">
    <location>
        <begin position="253"/>
        <end position="269"/>
    </location>
</feature>
<feature type="strand" evidence="25">
    <location>
        <begin position="276"/>
        <end position="281"/>
    </location>
</feature>
<feature type="helix" evidence="25">
    <location>
        <begin position="301"/>
        <end position="312"/>
    </location>
</feature>
<feature type="strand" evidence="26">
    <location>
        <begin position="313"/>
        <end position="315"/>
    </location>
</feature>
<feature type="strand" evidence="25">
    <location>
        <begin position="317"/>
        <end position="322"/>
    </location>
</feature>
<feature type="helix" evidence="25">
    <location>
        <begin position="325"/>
        <end position="333"/>
    </location>
</feature>
<feature type="strand" evidence="25">
    <location>
        <begin position="338"/>
        <end position="343"/>
    </location>
</feature>
<feature type="helix" evidence="25">
    <location>
        <begin position="344"/>
        <end position="348"/>
    </location>
</feature>
<feature type="helix" evidence="25">
    <location>
        <begin position="352"/>
        <end position="357"/>
    </location>
</feature>
<feature type="helix" evidence="25">
    <location>
        <begin position="367"/>
        <end position="369"/>
    </location>
</feature>
<feature type="turn" evidence="25">
    <location>
        <begin position="377"/>
        <end position="379"/>
    </location>
</feature>
<evidence type="ECO:0000250" key="1">
    <source>
        <dbReference type="UniProtKB" id="Q8GYB8"/>
    </source>
</evidence>
<evidence type="ECO:0000255" key="2"/>
<evidence type="ECO:0000269" key="3">
    <source>
    </source>
</evidence>
<evidence type="ECO:0000269" key="4">
    <source>
    </source>
</evidence>
<evidence type="ECO:0000269" key="5">
    <source>
    </source>
</evidence>
<evidence type="ECO:0000269" key="6">
    <source>
    </source>
</evidence>
<evidence type="ECO:0000269" key="7">
    <source>
    </source>
</evidence>
<evidence type="ECO:0000269" key="8">
    <source>
    </source>
</evidence>
<evidence type="ECO:0000269" key="9">
    <source>
    </source>
</evidence>
<evidence type="ECO:0000269" key="10">
    <source>
    </source>
</evidence>
<evidence type="ECO:0000269" key="11">
    <source>
    </source>
</evidence>
<evidence type="ECO:0000269" key="12">
    <source>
    </source>
</evidence>
<evidence type="ECO:0000269" key="13">
    <source>
    </source>
</evidence>
<evidence type="ECO:0000269" key="14">
    <source ref="4"/>
</evidence>
<evidence type="ECO:0000303" key="15">
    <source>
    </source>
</evidence>
<evidence type="ECO:0000303" key="16">
    <source>
    </source>
</evidence>
<evidence type="ECO:0000305" key="17"/>
<evidence type="ECO:0000305" key="18">
    <source>
    </source>
</evidence>
<evidence type="ECO:0000312" key="19">
    <source>
        <dbReference type="Araport" id="AT2G06050"/>
    </source>
</evidence>
<evidence type="ECO:0000312" key="20">
    <source>
        <dbReference type="EMBL" id="AAD19764.1"/>
    </source>
</evidence>
<evidence type="ECO:0007744" key="21">
    <source>
        <dbReference type="PDB" id="1Q45"/>
    </source>
</evidence>
<evidence type="ECO:0007744" key="22">
    <source>
        <dbReference type="PDB" id="2G5W"/>
    </source>
</evidence>
<evidence type="ECO:0007744" key="23">
    <source>
        <dbReference type="PDB" id="2Q3O"/>
    </source>
</evidence>
<evidence type="ECO:0007744" key="24">
    <source>
    </source>
</evidence>
<evidence type="ECO:0007829" key="25">
    <source>
        <dbReference type="PDB" id="1Q45"/>
    </source>
</evidence>
<evidence type="ECO:0007829" key="26">
    <source>
        <dbReference type="PDB" id="2Q3O"/>
    </source>
</evidence>
<keyword id="KW-0002">3D-structure</keyword>
<keyword id="KW-0007">Acetylation</keyword>
<keyword id="KW-0275">Fatty acid biosynthesis</keyword>
<keyword id="KW-0276">Fatty acid metabolism</keyword>
<keyword id="KW-0285">Flavoprotein</keyword>
<keyword id="KW-0288">FMN</keyword>
<keyword id="KW-0444">Lipid biosynthesis</keyword>
<keyword id="KW-0443">Lipid metabolism</keyword>
<keyword id="KW-0521">NADP</keyword>
<keyword id="KW-0560">Oxidoreductase</keyword>
<keyword id="KW-0925">Oxylipin biosynthesis</keyword>
<keyword id="KW-0576">Peroxisome</keyword>
<keyword id="KW-1185">Reference proteome</keyword>
<protein>
    <recommendedName>
        <fullName evidence="15">12-oxophytodienoate reductase 3</fullName>
        <ecNumber evidence="3 6 14">1.3.1.42</ecNumber>
    </recommendedName>
    <alternativeName>
        <fullName evidence="15">12-oxophytodienoate-10,11-reductase 3</fullName>
        <shortName evidence="15">AtOPR3</shortName>
        <shortName evidence="15">OPDA-reductase 3</shortName>
    </alternativeName>
    <alternativeName>
        <fullName evidence="16">Protein DELAYED DEHISCENCE 1</fullName>
    </alternativeName>
    <component>
        <recommendedName>
            <fullName evidence="17">12-oxophytodienoate reductase 3, N-terminally processed</fullName>
        </recommendedName>
    </component>
</protein>
<comment type="function">
    <text evidence="3 4 5 6 10 13">Specifically cleaves olefinic bonds in cyclic enones (PubMed:11094980). Involved in the biosynthesis of jasmonic acid (JA) and perhaps in biosynthesis or metabolism of other oxylipin signaling moleclules (PubMed:10872231, PubMed:10973494, PubMed:29291349). Required for the spatial and temporal regulation of JA levels during dehiscence of anthers, promoting the stomium degeneration program (PubMed:10899973, PubMed:10973494). In vitro, reduces 9S,13S-12-oxophytodienoic acid (9S,13S-OPDA) and 9R,13R-OPDA to 9S,13S-OPC-8:0 and 9R,13R-OPC-8:0, respectively (PubMed:10872231). Can detoxify the explosive 2,4,6-trinitrotoluene (TNT) in vitro by catalyzing its nitroreduction to form hydroxylamino-dinitrotoluene (HADNT) (PubMed:19605548).</text>
</comment>
<comment type="catalytic activity">
    <reaction evidence="3 6 14">
        <text>(1S,2S)-OPC-8 + NADP(+) = (9S,13S,15Z)-12-oxophyto-10,15-dienoate + NADPH + H(+)</text>
        <dbReference type="Rhea" id="RHEA:21888"/>
        <dbReference type="ChEBI" id="CHEBI:15378"/>
        <dbReference type="ChEBI" id="CHEBI:57411"/>
        <dbReference type="ChEBI" id="CHEBI:57783"/>
        <dbReference type="ChEBI" id="CHEBI:58349"/>
        <dbReference type="ChEBI" id="CHEBI:191855"/>
        <dbReference type="EC" id="1.3.1.42"/>
    </reaction>
</comment>
<comment type="cofactor">
    <cofactor evidence="6 8">
        <name>FMN</name>
        <dbReference type="ChEBI" id="CHEBI:58210"/>
    </cofactor>
</comment>
<comment type="biophysicochemical properties">
    <kinetics>
        <KM evidence="3 6">35 uM for (9S,13S)-OPDA</KM>
        <KM evidence="3 6">2.5 mM for cyclohexenone</KM>
        <KM evidence="3 6">12 uM for NADPH</KM>
        <Vmax evidence="3 6">53.7 nmol/sec/mg enzyme with (9S,13S)-OPDA as substrate</Vmax>
    </kinetics>
    <phDependence>
        <text evidence="3 6">Optimum pH is 7-8. Active from pH 5.0 to 8.5.</text>
    </phDependence>
</comment>
<comment type="pathway">
    <text evidence="17">Lipid metabolism; oxylipin biosynthesis.</text>
</comment>
<comment type="subcellular location">
    <subcellularLocation>
        <location evidence="7">Peroxisome</location>
    </subcellularLocation>
</comment>
<comment type="tissue specificity">
    <text evidence="4 5 6">Expressed in green seedling, leaves, flowers (anthers, pistil, petal and stamen), and to a lower extent in roots and siliques. Specifically expressed in filament during anther dehiscence initiation.</text>
</comment>
<comment type="developmental stage">
    <text evidence="4">At the initiation time of the stomium degeneration program, expressed in all floral organs. Later, transcripts levels increase in pistil, petal, stamen filament, and in vascular region close to the stamen filament. When the anther dehiscence is initiated, levels of transcripts decrease, except within the vascular tissues.</text>
</comment>
<comment type="induction">
    <text evidence="6 13 14">Induction mediated by wounding and methyl JA (MeJA) needs COI1. Also induced by BR (24-epibrassinolide), UV LIGHT, wind, touch, and the detergent Sapogenat T-110. Seems to not be influenced by salicylic acid, cold and heat treatments (PubMed:11094980, Ref.4). Induced by infection with the fungal pathogens Botritys cinerea and Alternaria brassicicola, insect feeding with Spodoptera littoralis, and wounding (PubMed:29291349).</text>
</comment>
<comment type="disruption phenotype">
    <text evidence="5 11 13">Male sterility (PubMed:10973494, PubMed:19765234, PubMed:29291349). Fertility can be restored by exogenous jasmonate but not by 12-oxophytodienoic acid (PubMed:10973494, PubMed:19765234, PubMed:29291349). Large petals with altered vein patterning (PubMed:19765234).</text>
</comment>
<comment type="similarity">
    <text evidence="17">Belongs to the NADH:flavin oxidoreductase/NADH oxidase family.</text>
</comment>
<organism>
    <name type="scientific">Arabidopsis thaliana</name>
    <name type="common">Mouse-ear cress</name>
    <dbReference type="NCBI Taxonomy" id="3702"/>
    <lineage>
        <taxon>Eukaryota</taxon>
        <taxon>Viridiplantae</taxon>
        <taxon>Streptophyta</taxon>
        <taxon>Embryophyta</taxon>
        <taxon>Tracheophyta</taxon>
        <taxon>Spermatophyta</taxon>
        <taxon>Magnoliopsida</taxon>
        <taxon>eudicotyledons</taxon>
        <taxon>Gunneridae</taxon>
        <taxon>Pentapetalae</taxon>
        <taxon>rosids</taxon>
        <taxon>malvids</taxon>
        <taxon>Brassicales</taxon>
        <taxon>Brassicaceae</taxon>
        <taxon>Camelineae</taxon>
        <taxon>Arabidopsis</taxon>
    </lineage>
</organism>
<name>OPR3_ARATH</name>
<reference key="1">
    <citation type="journal article" date="2000" name="Plant Mol. Biol.">
        <title>An Arabidopsis gene induced by wounding functionally homologous to flavoprotein oxidoreductases.</title>
        <authorList>
            <person name="Costa C.L."/>
            <person name="Arruda P."/>
            <person name="Benedetti C.E."/>
        </authorList>
    </citation>
    <scope>NUCLEOTIDE SEQUENCE [MRNA]</scope>
    <scope>FUNCTION</scope>
    <scope>BIOPHYSICOCHEMICAL PROPERTIES</scope>
    <scope>CATALYTIC ACTIVITY</scope>
    <scope>COFACTOR</scope>
    <scope>INDUCTION</scope>
    <scope>TISSUE SPECIFICITY</scope>
    <source>
        <strain>cv. Columbia</strain>
    </source>
</reference>
<reference key="2">
    <citation type="journal article" date="2000" name="Plant Cell">
        <title>The Arabidopsis DELAYED DEHISCENCE1 gene encodes an enzyme in the jasmonic acid synthesis pathway.</title>
        <authorList>
            <person name="Sanders P.M."/>
            <person name="Lee P.Y."/>
            <person name="Biesgen C."/>
            <person name="Boone J.D."/>
            <person name="Beals T.P."/>
            <person name="Weiler E.W."/>
            <person name="Goldberg R.B."/>
        </authorList>
    </citation>
    <scope>NUCLEOTIDE SEQUENCE [GENOMIC DNA]</scope>
    <scope>FUNCTION</scope>
    <scope>TISSUE SPECIFICITY</scope>
    <scope>DEVELOPMENTAL STAGE</scope>
    <source>
        <strain>cv. Wassilewskija</strain>
    </source>
</reference>
<reference key="3">
    <citation type="journal article" date="2000" name="Proc. Natl. Acad. Sci. U.S.A.">
        <title>The Arabidopsis male-sterile mutant, opr3, lacks a 12-oxo-phytodienoic acid reductase required for jasmonate synthesis.</title>
        <authorList>
            <person name="Stintzi A."/>
            <person name="Browse J."/>
        </authorList>
    </citation>
    <scope>NUCLEOTIDE SEQUENCE [MRNA]</scope>
    <scope>FUNCTION</scope>
    <scope>TISSUE SPECIFICITY</scope>
    <scope>DISRUPTION PHENOTYPE</scope>
    <source>
        <strain>cv. Wassilewskija</strain>
    </source>
</reference>
<reference key="4">
    <citation type="journal article" date="2000" name="J. Plant Physiol.">
        <title>A novel stress-inducible 12-oxo-phytodienoate reductase from Arabidopsis thaliana provides a potential link between brassinosteroid-action and jasmonic acid synthesis.</title>
        <authorList>
            <person name="Muessig C."/>
            <person name="Biesgen C."/>
            <person name="Lisso J."/>
            <person name="Uwer U."/>
            <person name="Weiler E.W."/>
            <person name="Altmann T."/>
        </authorList>
    </citation>
    <scope>NUCLEOTIDE SEQUENCE [MRNA]</scope>
    <scope>INDUCTION</scope>
    <scope>CATALYTIC ACTIVITY</scope>
    <source>
        <strain>cv. Columbia</strain>
    </source>
</reference>
<reference key="5">
    <citation type="journal article" date="1999" name="Nature">
        <title>Sequence and analysis of chromosome 2 of the plant Arabidopsis thaliana.</title>
        <authorList>
            <person name="Lin X."/>
            <person name="Kaul S."/>
            <person name="Rounsley S.D."/>
            <person name="Shea T.P."/>
            <person name="Benito M.-I."/>
            <person name="Town C.D."/>
            <person name="Fujii C.Y."/>
            <person name="Mason T.M."/>
            <person name="Bowman C.L."/>
            <person name="Barnstead M.E."/>
            <person name="Feldblyum T.V."/>
            <person name="Buell C.R."/>
            <person name="Ketchum K.A."/>
            <person name="Lee J.J."/>
            <person name="Ronning C.M."/>
            <person name="Koo H.L."/>
            <person name="Moffat K.S."/>
            <person name="Cronin L.A."/>
            <person name="Shen M."/>
            <person name="Pai G."/>
            <person name="Van Aken S."/>
            <person name="Umayam L."/>
            <person name="Tallon L.J."/>
            <person name="Gill J.E."/>
            <person name="Adams M.D."/>
            <person name="Carrera A.J."/>
            <person name="Creasy T.H."/>
            <person name="Goodman H.M."/>
            <person name="Somerville C.R."/>
            <person name="Copenhaver G.P."/>
            <person name="Preuss D."/>
            <person name="Nierman W.C."/>
            <person name="White O."/>
            <person name="Eisen J.A."/>
            <person name="Salzberg S.L."/>
            <person name="Fraser C.M."/>
            <person name="Venter J.C."/>
        </authorList>
    </citation>
    <scope>NUCLEOTIDE SEQUENCE [LARGE SCALE GENOMIC DNA]</scope>
    <source>
        <strain>cv. Columbia</strain>
    </source>
</reference>
<reference key="6">
    <citation type="journal article" date="2017" name="Plant J.">
        <title>Araport11: a complete reannotation of the Arabidopsis thaliana reference genome.</title>
        <authorList>
            <person name="Cheng C.Y."/>
            <person name="Krishnakumar V."/>
            <person name="Chan A.P."/>
            <person name="Thibaud-Nissen F."/>
            <person name="Schobel S."/>
            <person name="Town C.D."/>
        </authorList>
    </citation>
    <scope>GENOME REANNOTATION</scope>
    <source>
        <strain>cv. Columbia</strain>
    </source>
</reference>
<reference key="7">
    <citation type="journal article" date="2003" name="Science">
        <title>Empirical analysis of transcriptional activity in the Arabidopsis genome.</title>
        <authorList>
            <person name="Yamada K."/>
            <person name="Lim J."/>
            <person name="Dale J.M."/>
            <person name="Chen H."/>
            <person name="Shinn P."/>
            <person name="Palm C.J."/>
            <person name="Southwick A.M."/>
            <person name="Wu H.C."/>
            <person name="Kim C.J."/>
            <person name="Nguyen M."/>
            <person name="Pham P.K."/>
            <person name="Cheuk R.F."/>
            <person name="Karlin-Newmann G."/>
            <person name="Liu S.X."/>
            <person name="Lam B."/>
            <person name="Sakano H."/>
            <person name="Wu T."/>
            <person name="Yu G."/>
            <person name="Miranda M."/>
            <person name="Quach H.L."/>
            <person name="Tripp M."/>
            <person name="Chang C.H."/>
            <person name="Lee J.M."/>
            <person name="Toriumi M.J."/>
            <person name="Chan M.M."/>
            <person name="Tang C.C."/>
            <person name="Onodera C.S."/>
            <person name="Deng J.M."/>
            <person name="Akiyama K."/>
            <person name="Ansari Y."/>
            <person name="Arakawa T."/>
            <person name="Banh J."/>
            <person name="Banno F."/>
            <person name="Bowser L."/>
            <person name="Brooks S.Y."/>
            <person name="Carninci P."/>
            <person name="Chao Q."/>
            <person name="Choy N."/>
            <person name="Enju A."/>
            <person name="Goldsmith A.D."/>
            <person name="Gurjal M."/>
            <person name="Hansen N.F."/>
            <person name="Hayashizaki Y."/>
            <person name="Johnson-Hopson C."/>
            <person name="Hsuan V.W."/>
            <person name="Iida K."/>
            <person name="Karnes M."/>
            <person name="Khan S."/>
            <person name="Koesema E."/>
            <person name="Ishida J."/>
            <person name="Jiang P.X."/>
            <person name="Jones T."/>
            <person name="Kawai J."/>
            <person name="Kamiya A."/>
            <person name="Meyers C."/>
            <person name="Nakajima M."/>
            <person name="Narusaka M."/>
            <person name="Seki M."/>
            <person name="Sakurai T."/>
            <person name="Satou M."/>
            <person name="Tamse R."/>
            <person name="Vaysberg M."/>
            <person name="Wallender E.K."/>
            <person name="Wong C."/>
            <person name="Yamamura Y."/>
            <person name="Yuan S."/>
            <person name="Shinozaki K."/>
            <person name="Davis R.W."/>
            <person name="Theologis A."/>
            <person name="Ecker J.R."/>
        </authorList>
    </citation>
    <scope>NUCLEOTIDE SEQUENCE [LARGE SCALE MRNA]</scope>
    <source>
        <strain>cv. Columbia</strain>
    </source>
</reference>
<reference key="8">
    <citation type="journal article" date="2009" name="DNA Res.">
        <title>Analysis of multiple occurrences of alternative splicing events in Arabidopsis thaliana using novel sequenced full-length cDNAs.</title>
        <authorList>
            <person name="Iida K."/>
            <person name="Fukami-Kobayashi K."/>
            <person name="Toyoda A."/>
            <person name="Sakaki Y."/>
            <person name="Kobayashi M."/>
            <person name="Seki M."/>
            <person name="Shinozaki K."/>
        </authorList>
    </citation>
    <scope>NUCLEOTIDE SEQUENCE [LARGE SCALE MRNA]</scope>
    <source>
        <strain>cv. Columbia</strain>
    </source>
</reference>
<reference key="9">
    <citation type="journal article" date="2000" name="Planta">
        <title>12-Oxophytodienoate reductase 3 (OPR3) is the isoenzyme involved in jasmonate biosynthesis.</title>
        <authorList>
            <person name="Schaller F."/>
            <person name="Biesgen C."/>
            <person name="Muessig C."/>
            <person name="Altmann T."/>
            <person name="Weiler E.W."/>
        </authorList>
    </citation>
    <scope>FUNCTION</scope>
    <scope>CATALYTIC ACTIVITY</scope>
    <scope>SUBSTRATE SPECIFICITY</scope>
    <scope>BIOPHYSICOCHEMICAL PROPERTIES</scope>
</reference>
<reference key="10">
    <citation type="journal article" date="2002" name="Plant J.">
        <title>Characterization and cDNA-microarray expression analysis of 12-oxophytodienoate reductases reveals differential roles for octadecanoid biosynthesis in the local versus the systemic wound response.</title>
        <authorList>
            <person name="Strassner J."/>
            <person name="Schaller F."/>
            <person name="Frick U.B."/>
            <person name="Howe G.A."/>
            <person name="Weiler E.W."/>
            <person name="Amrhein N."/>
            <person name="Macheroux P."/>
            <person name="Schaller A."/>
        </authorList>
    </citation>
    <scope>SUBCELLULAR LOCATION</scope>
</reference>
<reference key="11">
    <citation type="journal article" date="2007" name="Plant Cell">
        <title>Proteome analysis of Arabidopsis leaf peroxisomes reveals novel targeting peptides, metabolic pathways, and defense mechanisms.</title>
        <authorList>
            <person name="Reumann S."/>
            <person name="Babujee L."/>
            <person name="Ma C."/>
            <person name="Wienkoop S."/>
            <person name="Siemsen T."/>
            <person name="Antonicelli G.E."/>
            <person name="Rasche N."/>
            <person name="Lueder F."/>
            <person name="Weckwerth W."/>
            <person name="Jahn O."/>
        </authorList>
    </citation>
    <scope>IDENTIFICATION BY MASS SPECTROMETRY</scope>
</reference>
<reference key="12">
    <citation type="journal article" date="2009" name="Plant J.">
        <title>Jasmonate controls late development stages of petal growth in Arabidopsis thaliana.</title>
        <authorList>
            <person name="Brioudes F."/>
            <person name="Joly C."/>
            <person name="Szecsi J."/>
            <person name="Varaud E."/>
            <person name="Leroux J."/>
            <person name="Bellvert F."/>
            <person name="Bertrand C."/>
            <person name="Bendahmane M."/>
        </authorList>
    </citation>
    <scope>DISRUPTION PHENOTYPE</scope>
</reference>
<reference key="13">
    <citation type="journal article" date="2009" name="Plant Physiol.">
        <title>The role of oxophytodienoate reductases in the detoxification of the explosive 2,4,6-trinitrotoluene by Arabidopsis.</title>
        <authorList>
            <person name="Beynon E.R."/>
            <person name="Symons Z.C."/>
            <person name="Jackson R.G."/>
            <person name="Lorenz A."/>
            <person name="Rylott E.L."/>
            <person name="Bruce N.C."/>
        </authorList>
    </citation>
    <scope>FUNCTION</scope>
</reference>
<reference key="14">
    <citation type="journal article" date="2012" name="Mol. Cell. Proteomics">
        <title>Comparative large-scale characterisation of plant vs. mammal proteins reveals similar and idiosyncratic N-alpha acetylation features.</title>
        <authorList>
            <person name="Bienvenut W.V."/>
            <person name="Sumpton D."/>
            <person name="Martinez A."/>
            <person name="Lilla S."/>
            <person name="Espagne C."/>
            <person name="Meinnel T."/>
            <person name="Giglione C."/>
        </authorList>
    </citation>
    <scope>ACETYLATION [LARGE SCALE ANALYSIS] AT THR-2</scope>
    <scope>CLEAVAGE OF INITIATOR METHIONINE [LARGE SCALE ANALYSIS]</scope>
    <scope>IDENTIFICATION BY MASS SPECTROMETRY [LARGE SCALE ANALYSIS]</scope>
</reference>
<reference key="15">
    <citation type="journal article" date="2018" name="Nat. Chem. Biol.">
        <title>An OPR3-independent pathway uses 4,5-didehydrojasmonate for jasmonate synthesis.</title>
        <authorList>
            <person name="Chini A."/>
            <person name="Monte I."/>
            <person name="Zamarreno A.M."/>
            <person name="Hamberg M."/>
            <person name="Lassueur S."/>
            <person name="Reymond P."/>
            <person name="Weiss S."/>
            <person name="Stintzi A."/>
            <person name="Schaller A."/>
            <person name="Porzel A."/>
            <person name="Garcia-Mina J.M."/>
            <person name="Solano R."/>
        </authorList>
    </citation>
    <scope>FUNCTION</scope>
    <scope>INDUCTION</scope>
    <scope>DISRUPTION PHENOTYPE</scope>
</reference>
<reference key="16">
    <citation type="journal article" date="2005" name="Proteins">
        <title>X-ray structure of Arabidopsis At2g06050, 12-oxophytodienoate reductase isoform 3.</title>
        <authorList>
            <person name="Malone T.E."/>
            <person name="Madson S.E."/>
            <person name="Wrobel R.L."/>
            <person name="Jeon W.B."/>
            <person name="Rosenberg N.S."/>
            <person name="Johnson K.A."/>
            <person name="Bingman C.A."/>
            <person name="Smith D.W."/>
            <person name="Phillips G.N. Jr."/>
            <person name="Markley J.L."/>
            <person name="Fox B.G."/>
        </authorList>
    </citation>
    <scope>X-RAY CRYSTALLOGRAPHY (2.00 ANGSTROMS) IN COMPLEX WITH FMN</scope>
    <scope>COFACTOR</scope>
</reference>
<reference key="17">
    <citation type="journal article" date="2007" name="Structure">
        <title>Ensemble refinement of protein crystal structures: validation and application.</title>
        <authorList>
            <person name="Levin E.J."/>
            <person name="Kondrashov D.A."/>
            <person name="Wesenberg G.E."/>
            <person name="Phillips G.N. Jr."/>
        </authorList>
    </citation>
    <scope>X-RAY CRYSTALLOGRAPHY (2.00 ANGSTROMS) IN COMPLEX WITH FMN</scope>
</reference>
<reference key="18">
    <citation type="journal article" date="2011" name="Proteins">
        <title>Crystal structure of Arabidopsis thaliana 12-oxophytodienoate reductase isoform 3 in complex with 8-iso prostaglandin A(1).</title>
        <authorList>
            <person name="Han B.W."/>
            <person name="Malone T.E."/>
            <person name="Kim D.J."/>
            <person name="Bingman C.A."/>
            <person name="Kim H.J."/>
            <person name="Fox B.G."/>
            <person name="Phillips G.N. Jr."/>
        </authorList>
    </citation>
    <scope>X-RAY CRYSTALLOGRAPHY (2.58 ANGSTROMS) IN COMPLEX WITH FMN AND SUBSTRATE</scope>
    <scope>ACTIVE SITE</scope>
</reference>
<proteinExistence type="evidence at protein level"/>
<sequence length="391" mass="42691">MTAAQGNSNETLFSSYKMGRFDLSHRVVLAPMTRCRALNGVPNAALAEYYAQRTTPGGFLISEGTMVSPGSAGFPHVPGIYSDEQVEAWKQVVEAVHAKGGFIFCQLWHVGRASHAVYQPNGGSPISSTNKPISENRWRVLLPDGSHVKYPKPRALEASEIPRVVEDYCLSALNAIRAGFDGIEIHGAHGYLIDQFLKDGINDRTDQYGGSIANRCRFLKQVVEGVVSAIGASKVGVRVSPAIDHLDATDSDPLSLGLAVVGMLNKLQGVNGSKLAYLHVTQPRYHAYGQTESGRQGSDEEEAKLMKSLRMAYNGTFMSSGGFNKELGMQAVQQGDADLVSYGRLFIANPDLVSRFKIDGELNKYNRKTFYTQDPVVGYTDYPFLAPFSRL</sequence>
<dbReference type="EC" id="1.3.1.42" evidence="3 6 14"/>
<dbReference type="EMBL" id="AF132212">
    <property type="protein sequence ID" value="AAD38925.1"/>
    <property type="molecule type" value="mRNA"/>
</dbReference>
<dbReference type="EMBL" id="AF218257">
    <property type="protein sequence ID" value="AAF67635.1"/>
    <property type="molecule type" value="Genomic_DNA"/>
</dbReference>
<dbReference type="EMBL" id="AF293653">
    <property type="protein sequence ID" value="AAG15379.1"/>
    <property type="molecule type" value="mRNA"/>
</dbReference>
<dbReference type="EMBL" id="AJ238149">
    <property type="protein sequence ID" value="CAB66143.1"/>
    <property type="molecule type" value="mRNA"/>
</dbReference>
<dbReference type="EMBL" id="AC006413">
    <property type="protein sequence ID" value="AAD19764.1"/>
    <property type="molecule type" value="Genomic_DNA"/>
</dbReference>
<dbReference type="EMBL" id="CP002685">
    <property type="protein sequence ID" value="AEC05998.1"/>
    <property type="molecule type" value="Genomic_DNA"/>
</dbReference>
<dbReference type="EMBL" id="CP002685">
    <property type="protein sequence ID" value="AEC05999.1"/>
    <property type="molecule type" value="Genomic_DNA"/>
</dbReference>
<dbReference type="EMBL" id="CP002685">
    <property type="protein sequence ID" value="AEC06000.1"/>
    <property type="molecule type" value="Genomic_DNA"/>
</dbReference>
<dbReference type="EMBL" id="AF370582">
    <property type="protein sequence ID" value="AAK43901.1"/>
    <property type="molecule type" value="mRNA"/>
</dbReference>
<dbReference type="EMBL" id="AF410322">
    <property type="protein sequence ID" value="AAK95308.1"/>
    <property type="molecule type" value="mRNA"/>
</dbReference>
<dbReference type="EMBL" id="AY097367">
    <property type="protein sequence ID" value="AAM19883.1"/>
    <property type="molecule type" value="mRNA"/>
</dbReference>
<dbReference type="EMBL" id="AK317250">
    <property type="protein sequence ID" value="BAH19929.1"/>
    <property type="molecule type" value="mRNA"/>
</dbReference>
<dbReference type="PIR" id="F84474">
    <property type="entry name" value="F84474"/>
</dbReference>
<dbReference type="RefSeq" id="NP_001077884.1">
    <property type="nucleotide sequence ID" value="NM_001084415.2"/>
</dbReference>
<dbReference type="RefSeq" id="NP_178662.1">
    <property type="nucleotide sequence ID" value="NM_126619.4"/>
</dbReference>
<dbReference type="RefSeq" id="NP_973431.1">
    <property type="nucleotide sequence ID" value="NM_201702.2"/>
</dbReference>
<dbReference type="PDB" id="1Q45">
    <property type="method" value="X-ray"/>
    <property type="resolution" value="2.00 A"/>
    <property type="chains" value="A/B=1-391"/>
</dbReference>
<dbReference type="PDB" id="2G5W">
    <property type="method" value="X-ray"/>
    <property type="resolution" value="2.58 A"/>
    <property type="chains" value="A/B=1-391"/>
</dbReference>
<dbReference type="PDB" id="2Q3O">
    <property type="method" value="X-ray"/>
    <property type="resolution" value="2.00 A"/>
    <property type="chains" value="A/B=1-391"/>
</dbReference>
<dbReference type="PDBsum" id="1Q45"/>
<dbReference type="PDBsum" id="2G5W"/>
<dbReference type="PDBsum" id="2Q3O"/>
<dbReference type="SMR" id="Q9FUP0"/>
<dbReference type="BioGRID" id="559">
    <property type="interactions" value="2"/>
</dbReference>
<dbReference type="FunCoup" id="Q9FUP0">
    <property type="interactions" value="226"/>
</dbReference>
<dbReference type="IntAct" id="Q9FUP0">
    <property type="interactions" value="3"/>
</dbReference>
<dbReference type="STRING" id="3702.Q9FUP0"/>
<dbReference type="SwissLipids" id="SLP:000001780"/>
<dbReference type="iPTMnet" id="Q9FUP0"/>
<dbReference type="PaxDb" id="3702-AT2G06050.2"/>
<dbReference type="ProteomicsDB" id="248761"/>
<dbReference type="DNASU" id="815160"/>
<dbReference type="EnsemblPlants" id="AT2G06050.1">
    <property type="protein sequence ID" value="AT2G06050.1"/>
    <property type="gene ID" value="AT2G06050"/>
</dbReference>
<dbReference type="EnsemblPlants" id="AT2G06050.2">
    <property type="protein sequence ID" value="AT2G06050.2"/>
    <property type="gene ID" value="AT2G06050"/>
</dbReference>
<dbReference type="EnsemblPlants" id="AT2G06050.3">
    <property type="protein sequence ID" value="AT2G06050.3"/>
    <property type="gene ID" value="AT2G06050"/>
</dbReference>
<dbReference type="GeneID" id="815160"/>
<dbReference type="Gramene" id="AT2G06050.1">
    <property type="protein sequence ID" value="AT2G06050.1"/>
    <property type="gene ID" value="AT2G06050"/>
</dbReference>
<dbReference type="Gramene" id="AT2G06050.2">
    <property type="protein sequence ID" value="AT2G06050.2"/>
    <property type="gene ID" value="AT2G06050"/>
</dbReference>
<dbReference type="Gramene" id="AT2G06050.3">
    <property type="protein sequence ID" value="AT2G06050.3"/>
    <property type="gene ID" value="AT2G06050"/>
</dbReference>
<dbReference type="KEGG" id="ath:AT2G06050"/>
<dbReference type="Araport" id="AT2G06050"/>
<dbReference type="TAIR" id="AT2G06050">
    <property type="gene designation" value="OPR3"/>
</dbReference>
<dbReference type="eggNOG" id="KOG0134">
    <property type="taxonomic scope" value="Eukaryota"/>
</dbReference>
<dbReference type="HOGENOM" id="CLU_012153_0_2_1"/>
<dbReference type="InParanoid" id="Q9FUP0"/>
<dbReference type="OMA" id="GKGPVGY"/>
<dbReference type="PhylomeDB" id="Q9FUP0"/>
<dbReference type="BioCyc" id="ARA:AT2G06050-MONOMER"/>
<dbReference type="BioCyc" id="MetaCyc:AT2G06050-MONOMER"/>
<dbReference type="BRENDA" id="1.3.1.42">
    <property type="organism ID" value="399"/>
</dbReference>
<dbReference type="UniPathway" id="UPA00382"/>
<dbReference type="EvolutionaryTrace" id="Q9FUP0"/>
<dbReference type="PRO" id="PR:Q9FUP0"/>
<dbReference type="Proteomes" id="UP000006548">
    <property type="component" value="Chromosome 2"/>
</dbReference>
<dbReference type="ExpressionAtlas" id="Q9FUP0">
    <property type="expression patterns" value="baseline and differential"/>
</dbReference>
<dbReference type="GO" id="GO:0005777">
    <property type="term" value="C:peroxisome"/>
    <property type="evidence" value="ECO:0007005"/>
    <property type="project" value="TAIR"/>
</dbReference>
<dbReference type="GO" id="GO:0016629">
    <property type="term" value="F:12-oxophytodienoate reductase activity"/>
    <property type="evidence" value="ECO:0000314"/>
    <property type="project" value="TAIR"/>
</dbReference>
<dbReference type="GO" id="GO:0010181">
    <property type="term" value="F:FMN binding"/>
    <property type="evidence" value="ECO:0000314"/>
    <property type="project" value="UniProtKB"/>
</dbReference>
<dbReference type="GO" id="GO:0009695">
    <property type="term" value="P:jasmonic acid biosynthetic process"/>
    <property type="evidence" value="ECO:0000315"/>
    <property type="project" value="TAIR"/>
</dbReference>
<dbReference type="GO" id="GO:0031408">
    <property type="term" value="P:oxylipin biosynthetic process"/>
    <property type="evidence" value="ECO:0007669"/>
    <property type="project" value="UniProtKB-UniPathway"/>
</dbReference>
<dbReference type="GO" id="GO:0009620">
    <property type="term" value="P:response to fungus"/>
    <property type="evidence" value="ECO:0000270"/>
    <property type="project" value="TAIR"/>
</dbReference>
<dbReference type="GO" id="GO:0010193">
    <property type="term" value="P:response to ozone"/>
    <property type="evidence" value="ECO:0000270"/>
    <property type="project" value="TAIR"/>
</dbReference>
<dbReference type="GO" id="GO:0048443">
    <property type="term" value="P:stamen development"/>
    <property type="evidence" value="ECO:0000315"/>
    <property type="project" value="TAIR"/>
</dbReference>
<dbReference type="CDD" id="cd02933">
    <property type="entry name" value="OYE_like_FMN"/>
    <property type="match status" value="1"/>
</dbReference>
<dbReference type="FunFam" id="3.20.20.70:FF:000073">
    <property type="entry name" value="12-oxophytodienoate reductase 3"/>
    <property type="match status" value="1"/>
</dbReference>
<dbReference type="Gene3D" id="3.20.20.70">
    <property type="entry name" value="Aldolase class I"/>
    <property type="match status" value="1"/>
</dbReference>
<dbReference type="InterPro" id="IPR013785">
    <property type="entry name" value="Aldolase_TIM"/>
</dbReference>
<dbReference type="InterPro" id="IPR001155">
    <property type="entry name" value="OxRdtase_FMN_N"/>
</dbReference>
<dbReference type="InterPro" id="IPR045247">
    <property type="entry name" value="Oye-like"/>
</dbReference>
<dbReference type="PANTHER" id="PTHR22893:SF112">
    <property type="entry name" value="12-OXOPHYTODIENOATE REDUCTASE 3"/>
    <property type="match status" value="1"/>
</dbReference>
<dbReference type="PANTHER" id="PTHR22893">
    <property type="entry name" value="NADH OXIDOREDUCTASE-RELATED"/>
    <property type="match status" value="1"/>
</dbReference>
<dbReference type="Pfam" id="PF00724">
    <property type="entry name" value="Oxidored_FMN"/>
    <property type="match status" value="1"/>
</dbReference>
<dbReference type="SUPFAM" id="SSF51395">
    <property type="entry name" value="FMN-linked oxidoreductases"/>
    <property type="match status" value="1"/>
</dbReference>
<accession>Q9FUP0</accession>
<accession>B9DGR2</accession>
<accession>Q9LLD6</accession>
<accession>Q9SCY4</accession>
<accession>Q9XHD2</accession>
<accession>Q9ZQ01</accession>